<feature type="signal peptide" evidence="1">
    <location>
        <begin position="1"/>
        <end position="56"/>
    </location>
</feature>
<feature type="chain" id="PRO_0000038315" description="120 kDa Glycoprotein O">
    <location>
        <begin position="57"/>
        <end position="651"/>
    </location>
</feature>
<feature type="chain" id="PRO_0000445357" description="80 kDa Glycoprotein O">
    <location>
        <begin position="57"/>
        <end status="unknown"/>
    </location>
</feature>
<feature type="region of interest" description="Disordered" evidence="2">
    <location>
        <begin position="275"/>
        <end position="303"/>
    </location>
</feature>
<feature type="compositionally biased region" description="Low complexity" evidence="2">
    <location>
        <begin position="275"/>
        <end position="292"/>
    </location>
</feature>
<feature type="glycosylation site" description="N-linked (GlcNAc...) asparagine; by host" evidence="1">
    <location>
        <position position="74"/>
    </location>
</feature>
<feature type="glycosylation site" description="N-linked (GlcNAc...) asparagine; by host" evidence="1">
    <location>
        <position position="97"/>
    </location>
</feature>
<feature type="glycosylation site" description="N-linked (GlcNAc...) asparagine; by host" evidence="1">
    <location>
        <position position="147"/>
    </location>
</feature>
<feature type="glycosylation site" description="N-linked (GlcNAc...) asparagine; by host" evidence="1">
    <location>
        <position position="208"/>
    </location>
</feature>
<feature type="glycosylation site" description="N-linked (GlcNAc...) asparagine; by host" evidence="1">
    <location>
        <position position="223"/>
    </location>
</feature>
<feature type="glycosylation site" description="N-linked (GlcNAc...) asparagine; by host" evidence="1">
    <location>
        <position position="234"/>
    </location>
</feature>
<feature type="glycosylation site" description="N-linked (GlcNAc...) asparagine; by host" evidence="1">
    <location>
        <position position="254"/>
    </location>
</feature>
<feature type="glycosylation site" description="N-linked (GlcNAc...) asparagine; by host" evidence="1">
    <location>
        <position position="302"/>
    </location>
</feature>
<feature type="glycosylation site" description="N-linked (GlcNAc...) asparagine; by host" evidence="1">
    <location>
        <position position="355"/>
    </location>
</feature>
<feature type="glycosylation site" description="N-linked (GlcNAc...) asparagine; by host" evidence="1">
    <location>
        <position position="378"/>
    </location>
</feature>
<feature type="glycosylation site" description="N-linked (GlcNAc...) asparagine; by host" evidence="1">
    <location>
        <position position="395"/>
    </location>
</feature>
<feature type="glycosylation site" description="N-linked (GlcNAc...) asparagine; by host" evidence="1">
    <location>
        <position position="469"/>
    </location>
</feature>
<feature type="glycosylation site" description="N-linked (GlcNAc...) asparagine; by host" evidence="1">
    <location>
        <position position="502"/>
    </location>
</feature>
<feature type="glycosylation site" description="N-linked (GlcNAc...) asparagine; by host" evidence="1">
    <location>
        <position position="520"/>
    </location>
</feature>
<feature type="glycosylation site" description="N-linked (GlcNAc...) asparagine; by host" evidence="1">
    <location>
        <position position="546"/>
    </location>
</feature>
<feature type="glycosylation site" description="N-linked (GlcNAc...) asparagine; by host" evidence="1">
    <location>
        <position position="603"/>
    </location>
</feature>
<feature type="glycosylation site" description="N-linked (GlcNAc...) asparagine; by host" evidence="1">
    <location>
        <position position="620"/>
    </location>
</feature>
<feature type="glycosylation site" description="N-linked (GlcNAc...) asparagine; by host" evidence="1">
    <location>
        <position position="631"/>
    </location>
</feature>
<evidence type="ECO:0000255" key="1"/>
<evidence type="ECO:0000256" key="2">
    <source>
        <dbReference type="SAM" id="MobiDB-lite"/>
    </source>
</evidence>
<evidence type="ECO:0000269" key="3">
    <source>
    </source>
</evidence>
<evidence type="ECO:0000269" key="4">
    <source>
    </source>
</evidence>
<evidence type="ECO:0000305" key="5"/>
<name>GO_HHV6G</name>
<organismHost>
    <name type="scientific">Homo sapiens</name>
    <name type="common">Human</name>
    <dbReference type="NCBI Taxonomy" id="9606"/>
</organismHost>
<reference key="1">
    <citation type="journal article" date="1991" name="J. Virol.">
        <title>Identification of the human herpesvirus 6 glycoprotein H and putative large tegument protein genes.</title>
        <authorList>
            <person name="Josephs S.F."/>
            <person name="Ablashi D.V."/>
            <person name="Salahuddin S.Z."/>
            <person name="Jagodzinski L.L."/>
            <person name="Wong-Staal F."/>
            <person name="Gallo R.C."/>
        </authorList>
    </citation>
    <scope>NUCLEOTIDE SEQUENCE [GENOMIC DNA]</scope>
</reference>
<reference key="2">
    <citation type="journal article" date="2004" name="J. Virol.">
        <title>Discovery of a second form of tripartite complex containing gH-gL of human herpesvirus 6 and observations on CD46.</title>
        <authorList>
            <person name="Mori Y."/>
            <person name="Akkapaiboon P."/>
            <person name="Yonemoto S."/>
            <person name="Koike M."/>
            <person name="Takemoto M."/>
            <person name="Sadaoka T."/>
            <person name="Sasamoto Y."/>
            <person name="Konishi S."/>
            <person name="Uchiyama Y."/>
            <person name="Yamanishi K."/>
        </authorList>
    </citation>
    <scope>IDENTIFICATION IN COMPLEX WITH GLYCOPROTEIN L AND GLYCOPROTEIN H</scope>
    <scope>SUBCELLULAR LOCATION (80K GLYCOPROTEIN O)</scope>
    <scope>SUBUNIT (80K GLYCOPROTEIN O)</scope>
    <scope>GLYCOSYLATION (80K GLYCOPROTEIN O)</scope>
    <scope>GLYCOSYLATION (120K GLYCOPROTEIN O)</scope>
</reference>
<reference key="3">
    <citation type="journal article" date="2015" name="J. Virol.">
        <title>Maturation of human herpesvirus 6A glycoprotein O requires coexpression of glycoprotein H and glycoprotein L.</title>
        <authorList>
            <person name="Tang H."/>
            <person name="Mahmoud N.F."/>
            <person name="Mori Y."/>
        </authorList>
    </citation>
    <scope>PROTEOLYTIC CLEAVAGE (120K GLYCOPROTEIN O)</scope>
    <scope>SUBCELLULAR LOCATION (80K GLYCOPROTEIN O)</scope>
</reference>
<keyword id="KW-0325">Glycoprotein</keyword>
<keyword id="KW-1032">Host cell membrane</keyword>
<keyword id="KW-1043">Host membrane</keyword>
<keyword id="KW-0472">Membrane</keyword>
<keyword id="KW-0732">Signal</keyword>
<keyword id="KW-0946">Virion</keyword>
<accession>P30005</accession>
<accession>P30006</accession>
<gene>
    <name type="primary">U47</name>
    <name type="synonym">RF3/RF4</name>
</gene>
<sequence>MHLEVIVQSYKKSKYYFSHTFYLYKFIVVNSPDMLHISQLGLFLGLFAIVMHSANLIKYTSDPLEAFKTVNRHNWSDEQREHFYDLRNLYTSFCQTNLSLDCFTQILTNVFSWDIRDSQCKSAVNLSPLQNLPRTETKIVLSSTAANKSIIASSFSLFYLLFATLSTYTADPPCVELLPFKILGAQLFDIKLTEESLRMAMSKFSNSNLTRSLTSFTSEIFFNYTSFVYFLLYNTTSCVPSNDQYFKQSPKPINVTTSFGRTIVNFDSILTTTPSSTSASLTSPHIPSTNIPTPEPPPVTKNSTKLHTDTIKVTPNTPTITTQTTESIKKIVKRSDFPRPMYTPTDIPTLTIRLNATIKTEQNTENPKSPPKPTNFENTTIRIPKTFESATVTTNATQKIESTTFTTIGIKEINGNTYSSPKNSIYLKSKSQQSTTKFTDAEHTTPILKFTTWQNTARTYMSHNTEVQNMTDRFQRTTLKSSNELPTIQTLSVTPKQKLPSNVTAKTEVHITNNALPSSNSSYSITEVTKEVKHTRMSASTHEEINHTEIAQITPILNAHTSEKSTTPQRSFTAETFLTTSSKPAILTWSNLLSTTPKEPLTNTSLRWTDHITTQLTTSNRTQSAKLTKANISSQTTNIYPQTITGRSTEV</sequence>
<organism>
    <name type="scientific">Human herpesvirus 6A (strain GS)</name>
    <name type="common">HHV-6 variant A</name>
    <name type="synonym">Human B lymphotropic virus</name>
    <dbReference type="NCBI Taxonomy" id="10369"/>
    <lineage>
        <taxon>Viruses</taxon>
        <taxon>Duplodnaviria</taxon>
        <taxon>Heunggongvirae</taxon>
        <taxon>Peploviricota</taxon>
        <taxon>Herviviricetes</taxon>
        <taxon>Herpesvirales</taxon>
        <taxon>Orthoherpesviridae</taxon>
        <taxon>Betaherpesvirinae</taxon>
        <taxon>Roseolovirus</taxon>
        <taxon>Roseolovirus humanbeta6a</taxon>
        <taxon>Human betaherpesvirus 6A</taxon>
    </lineage>
</organism>
<dbReference type="EMBL" id="S57509">
    <property type="protein sequence ID" value="AAB19780.1"/>
    <property type="status" value="ALT_FRAME"/>
    <property type="molecule type" value="Genomic_DNA"/>
</dbReference>
<dbReference type="EMBL" id="S57509">
    <property type="protein sequence ID" value="AAB19781.1"/>
    <property type="status" value="ALT_FRAME"/>
    <property type="molecule type" value="Genomic_DNA"/>
</dbReference>
<dbReference type="PIR" id="B40511">
    <property type="entry name" value="B40511"/>
</dbReference>
<dbReference type="PIR" id="PQ0856">
    <property type="entry name" value="PQ0856"/>
</dbReference>
<dbReference type="GlyCosmos" id="P30005">
    <property type="glycosylation" value="18 sites, No reported glycans"/>
</dbReference>
<dbReference type="GO" id="GO:0020002">
    <property type="term" value="C:host cell plasma membrane"/>
    <property type="evidence" value="ECO:0007669"/>
    <property type="project" value="UniProtKB-SubCell"/>
</dbReference>
<dbReference type="GO" id="GO:0016020">
    <property type="term" value="C:membrane"/>
    <property type="evidence" value="ECO:0007669"/>
    <property type="project" value="UniProtKB-KW"/>
</dbReference>
<dbReference type="GO" id="GO:0044423">
    <property type="term" value="C:virion component"/>
    <property type="evidence" value="ECO:0007669"/>
    <property type="project" value="UniProtKB-KW"/>
</dbReference>
<dbReference type="InterPro" id="IPR008645">
    <property type="entry name" value="Roseolovirus_U47"/>
</dbReference>
<dbReference type="Pfam" id="PF05467">
    <property type="entry name" value="Herpes_U47"/>
    <property type="match status" value="2"/>
</dbReference>
<protein>
    <recommendedName>
        <fullName>120 kDa Glycoprotein O</fullName>
        <shortName>gO-120K</shortName>
    </recommendedName>
    <alternativeName>
        <fullName>Glycoprotein U47</fullName>
    </alternativeName>
    <component>
        <recommendedName>
            <fullName>80 kDa Glycoprotein O</fullName>
            <shortName>gO-80K</shortName>
        </recommendedName>
    </component>
</protein>
<proteinExistence type="evidence at protein level"/>
<comment type="subunit">
    <molecule>80 kDa Glycoprotein O</molecule>
    <text evidence="3">Part of a gH-gL-gO complex.</text>
</comment>
<comment type="subcellular location">
    <molecule>80 kDa Glycoprotein O</molecule>
    <subcellularLocation>
        <location evidence="3">Virion</location>
    </subcellularLocation>
    <subcellularLocation>
        <location evidence="4">Host cell membrane</location>
    </subcellularLocation>
    <text evidence="4">Expressed on the host cell surface as a part of the gH-gL-gO complex.</text>
</comment>
<comment type="PTM">
    <molecule>120 kDa Glycoprotein O</molecule>
    <text evidence="4">A shorter mature protein, gO-80K, is produced probably by proteolytic cleavage.</text>
</comment>
<comment type="PTM">
    <molecule>120 kDa Glycoprotein O</molecule>
    <text evidence="3">Modified with high mannose-oligosaccharides.</text>
</comment>
<comment type="PTM">
    <molecule>80 kDa Glycoprotein O</molecule>
    <text evidence="3">N-glycosylated with complex glycans.</text>
</comment>
<comment type="similarity">
    <text evidence="5">Belongs to the herpesviridae U47 family.</text>
</comment>
<comment type="caution">
    <text evidence="5">It is uncertain whether Met-1 or Met-34 is the initiator.</text>
</comment>
<comment type="sequence caution" evidence="5">
    <conflict type="frameshift">
        <sequence resource="EMBL-CDS" id="AAB19780"/>
    </conflict>
</comment>
<comment type="sequence caution" evidence="5">
    <conflict type="frameshift">
        <sequence resource="EMBL-CDS" id="AAB19781"/>
    </conflict>
</comment>